<organism>
    <name type="scientific">Bos taurus</name>
    <name type="common">Bovine</name>
    <dbReference type="NCBI Taxonomy" id="9913"/>
    <lineage>
        <taxon>Eukaryota</taxon>
        <taxon>Metazoa</taxon>
        <taxon>Chordata</taxon>
        <taxon>Craniata</taxon>
        <taxon>Vertebrata</taxon>
        <taxon>Euteleostomi</taxon>
        <taxon>Mammalia</taxon>
        <taxon>Eutheria</taxon>
        <taxon>Laurasiatheria</taxon>
        <taxon>Artiodactyla</taxon>
        <taxon>Ruminantia</taxon>
        <taxon>Pecora</taxon>
        <taxon>Bovidae</taxon>
        <taxon>Bovinae</taxon>
        <taxon>Bos</taxon>
    </lineage>
</organism>
<sequence>MEAAGARNRDARSRAEKSPPESRKVYMDYNATTPLEPEVIEAMTEAMREAWGNPSSSYPAGRKAKEIINTARENLAKMIGGQPQDVIFTSGGTESNNLVIQSVVKHFHKVHAANGDTGGHPNPVDGALPHIITCTVEHDSIRLPLEHLREERVAEVTFVPVSKVNGQVEAEDILAAVRPATCLVTIMLANNETGVIMPVPEISRRVRALNQQRVAGGLPGVLVHTDAAQALGKQRVDVRDLGVDFLTIVGHKFYGPRIGALYVRGLGEHTPLYPMLFGGGQERNFRPGTENTPMIAGLGKAAELVAENGEAYEAHMRGVRDYLEERLAAEFGERIHLNSQFPGAERLPNTCNFSIRGPQLQGRAVLAQCRTLLASVGAACHSDLGDRPSPVLLSCGVPVDVARNAIRLSVGRSSTRAEVDLVVQDLKQAVARLEGQA</sequence>
<accession>A2VDS1</accession>
<proteinExistence type="evidence at transcript level"/>
<name>SCLY_BOVIN</name>
<keyword id="KW-0007">Acetylation</keyword>
<keyword id="KW-0963">Cytoplasm</keyword>
<keyword id="KW-0456">Lyase</keyword>
<keyword id="KW-0663">Pyridoxal phosphate</keyword>
<keyword id="KW-1185">Reference proteome</keyword>
<keyword id="KW-0808">Transferase</keyword>
<dbReference type="EC" id="4.4.1.16"/>
<dbReference type="EMBL" id="BC133375">
    <property type="protein sequence ID" value="AAI33376.1"/>
    <property type="molecule type" value="mRNA"/>
</dbReference>
<dbReference type="RefSeq" id="NP_001077273.1">
    <property type="nucleotide sequence ID" value="NM_001083804.1"/>
</dbReference>
<dbReference type="SMR" id="A2VDS1"/>
<dbReference type="FunCoup" id="A2VDS1">
    <property type="interactions" value="319"/>
</dbReference>
<dbReference type="STRING" id="9913.ENSBTAP00000013719"/>
<dbReference type="PaxDb" id="9913-ENSBTAP00000013719"/>
<dbReference type="PeptideAtlas" id="A2VDS1"/>
<dbReference type="GeneID" id="790815"/>
<dbReference type="KEGG" id="bta:790815"/>
<dbReference type="CTD" id="51540"/>
<dbReference type="VEuPathDB" id="HostDB:ENSBTAG00000017826"/>
<dbReference type="eggNOG" id="KOG1549">
    <property type="taxonomic scope" value="Eukaryota"/>
</dbReference>
<dbReference type="HOGENOM" id="CLU_003433_0_0_1"/>
<dbReference type="InParanoid" id="A2VDS1"/>
<dbReference type="OMA" id="IIYGQSE"/>
<dbReference type="OrthoDB" id="10250117at2759"/>
<dbReference type="TreeFam" id="TF313550"/>
<dbReference type="Reactome" id="R-BTA-2408508">
    <property type="pathway name" value="Metabolism of ingested SeMet, Sec, MeSec into H2Se"/>
</dbReference>
<dbReference type="Proteomes" id="UP000009136">
    <property type="component" value="Chromosome 3"/>
</dbReference>
<dbReference type="Bgee" id="ENSBTAG00000017826">
    <property type="expression patterns" value="Expressed in cortex of kidney and 104 other cell types or tissues"/>
</dbReference>
<dbReference type="GO" id="GO:0005829">
    <property type="term" value="C:cytosol"/>
    <property type="evidence" value="ECO:0007669"/>
    <property type="project" value="UniProtKB-SubCell"/>
</dbReference>
<dbReference type="GO" id="GO:0009000">
    <property type="term" value="F:selenocysteine lyase activity"/>
    <property type="evidence" value="ECO:0007669"/>
    <property type="project" value="UniProtKB-EC"/>
</dbReference>
<dbReference type="GO" id="GO:0016740">
    <property type="term" value="F:transferase activity"/>
    <property type="evidence" value="ECO:0007669"/>
    <property type="project" value="UniProtKB-KW"/>
</dbReference>
<dbReference type="FunFam" id="3.40.640.10:FF:000083">
    <property type="entry name" value="Selenocysteine lyase"/>
    <property type="match status" value="1"/>
</dbReference>
<dbReference type="FunFam" id="3.90.1150.10:FF:000065">
    <property type="entry name" value="Selenocysteine lyase"/>
    <property type="match status" value="1"/>
</dbReference>
<dbReference type="Gene3D" id="1.10.260.50">
    <property type="match status" value="1"/>
</dbReference>
<dbReference type="Gene3D" id="3.90.1150.10">
    <property type="entry name" value="Aspartate Aminotransferase, domain 1"/>
    <property type="match status" value="1"/>
</dbReference>
<dbReference type="Gene3D" id="3.40.640.10">
    <property type="entry name" value="Type I PLP-dependent aspartate aminotransferase-like (Major domain)"/>
    <property type="match status" value="1"/>
</dbReference>
<dbReference type="InterPro" id="IPR000192">
    <property type="entry name" value="Aminotrans_V_dom"/>
</dbReference>
<dbReference type="InterPro" id="IPR016454">
    <property type="entry name" value="Cysteine_dSase"/>
</dbReference>
<dbReference type="InterPro" id="IPR015424">
    <property type="entry name" value="PyrdxlP-dep_Trfase"/>
</dbReference>
<dbReference type="InterPro" id="IPR015421">
    <property type="entry name" value="PyrdxlP-dep_Trfase_major"/>
</dbReference>
<dbReference type="InterPro" id="IPR015422">
    <property type="entry name" value="PyrdxlP-dep_Trfase_small"/>
</dbReference>
<dbReference type="PANTHER" id="PTHR11601">
    <property type="entry name" value="CYSTEINE DESULFURYLASE FAMILY MEMBER"/>
    <property type="match status" value="1"/>
</dbReference>
<dbReference type="PANTHER" id="PTHR11601:SF62">
    <property type="entry name" value="SELENOCYSTEINE LYASE"/>
    <property type="match status" value="1"/>
</dbReference>
<dbReference type="Pfam" id="PF00266">
    <property type="entry name" value="Aminotran_5"/>
    <property type="match status" value="1"/>
</dbReference>
<dbReference type="PIRSF" id="PIRSF005572">
    <property type="entry name" value="NifS"/>
    <property type="match status" value="1"/>
</dbReference>
<dbReference type="SUPFAM" id="SSF53383">
    <property type="entry name" value="PLP-dependent transferases"/>
    <property type="match status" value="1"/>
</dbReference>
<protein>
    <recommendedName>
        <fullName>Selenocysteine lyase</fullName>
        <ecNumber>4.4.1.16</ecNumber>
    </recommendedName>
</protein>
<feature type="chain" id="PRO_0000317011" description="Selenocysteine lyase">
    <location>
        <begin position="1"/>
        <end position="437"/>
    </location>
</feature>
<feature type="region of interest" description="Disordered" evidence="4">
    <location>
        <begin position="1"/>
        <end position="30"/>
    </location>
</feature>
<feature type="compositionally biased region" description="Basic and acidic residues" evidence="4">
    <location>
        <begin position="7"/>
        <end position="26"/>
    </location>
</feature>
<feature type="active site" description="S-selanylcysteine intermediate" evidence="1">
    <location>
        <position position="380"/>
    </location>
</feature>
<feature type="modified residue" description="N-acetylmethionine" evidence="2">
    <location>
        <position position="1"/>
    </location>
</feature>
<feature type="modified residue" description="N6-(pyridoxal phosphate)lysine" evidence="1">
    <location>
        <position position="252"/>
    </location>
</feature>
<comment type="function">
    <text evidence="1">Catalyzes the decomposition of L-selenocysteine to L-alanine and elemental selenium.</text>
</comment>
<comment type="catalytic activity">
    <reaction evidence="1">
        <text>L-selenocysteine + AH2 = hydrogenselenide + L-alanine + A + H(+)</text>
        <dbReference type="Rhea" id="RHEA:11632"/>
        <dbReference type="ChEBI" id="CHEBI:13193"/>
        <dbReference type="ChEBI" id="CHEBI:15378"/>
        <dbReference type="ChEBI" id="CHEBI:17499"/>
        <dbReference type="ChEBI" id="CHEBI:29317"/>
        <dbReference type="ChEBI" id="CHEBI:57843"/>
        <dbReference type="ChEBI" id="CHEBI:57972"/>
        <dbReference type="EC" id="4.4.1.16"/>
    </reaction>
    <physiologicalReaction direction="left-to-right" evidence="1">
        <dbReference type="Rhea" id="RHEA:11633"/>
    </physiologicalReaction>
</comment>
<comment type="cofactor">
    <cofactor evidence="1">
        <name>pyridoxal 5'-phosphate</name>
        <dbReference type="ChEBI" id="CHEBI:597326"/>
    </cofactor>
</comment>
<comment type="subunit">
    <text evidence="1">Homodimer.</text>
</comment>
<comment type="subcellular location">
    <subcellularLocation>
        <location evidence="3">Cytoplasm</location>
        <location evidence="3">Cytosol</location>
    </subcellularLocation>
</comment>
<comment type="similarity">
    <text evidence="5">Belongs to the class-V pyridoxal-phosphate-dependent aminotransferase family.</text>
</comment>
<reference key="1">
    <citation type="submission" date="2007-02" db="EMBL/GenBank/DDBJ databases">
        <authorList>
            <consortium name="NIH - Mammalian Gene Collection (MGC) project"/>
        </authorList>
    </citation>
    <scope>NUCLEOTIDE SEQUENCE [LARGE SCALE MRNA]</scope>
    <source>
        <strain>Hereford</strain>
        <tissue>Fetal skin</tissue>
    </source>
</reference>
<gene>
    <name type="primary">SCLY</name>
</gene>
<evidence type="ECO:0000250" key="1">
    <source>
        <dbReference type="UniProtKB" id="Q68FT9"/>
    </source>
</evidence>
<evidence type="ECO:0000250" key="2">
    <source>
        <dbReference type="UniProtKB" id="Q96I15"/>
    </source>
</evidence>
<evidence type="ECO:0000250" key="3">
    <source>
        <dbReference type="UniProtKB" id="Q9JLI6"/>
    </source>
</evidence>
<evidence type="ECO:0000256" key="4">
    <source>
        <dbReference type="SAM" id="MobiDB-lite"/>
    </source>
</evidence>
<evidence type="ECO:0000305" key="5"/>